<protein>
    <recommendedName>
        <fullName evidence="11">Flavin-dependent halogenase armH2</fullName>
        <ecNumber evidence="6">1.14.19.-</ecNumber>
    </recommendedName>
</protein>
<sequence>MVTQVPSSTNILVIGGGPAGAYAAGVLVREGFEVTLLEKDFFPRYHIGESMLPSWRQFLRFIDMEEKMKNYGFLPKPGGAIKLNQDKREGYTDFIANNPENSAWNVVRSEFDQLLLNHVAEQGVKVYEGTRVDEIHFSPEEPTRPVSLTWSKDDKTRGDISFNWLVDASGRNGLMSTKYLKNRTFNRSLKNVAVWGYWTGTNRYAPGTNRENAPWFEALTDETGWVWFIPLHDGTTNVGVVLVEEDSKRKKAEYRAKHEGKSLAEVQYDRYMEDIQLAPGLIGLLGDGKFDGKLQAAGDYSYHASGYAGPHFRIAGDAGAFIDPFFSSGIHLAFTGGLSAACTIAASIRGHCTEEEASEFHSSKIKTAFTRFLFVVLGIYKQLRAQQSQILYEADEESLDRAILSLRPVIQGAADADADLTKEELENTLDFCKSVLEDEPQANGNGAAKQDAVPAPIPVALSSGAGPEKDAKRREIEAESLRSLQEMDDCKRNFGTEVINGFFVKMEQGVLGLVRA</sequence>
<accession>G3FLZ8</accession>
<feature type="chain" id="PRO_0000442631" description="Flavin-dependent halogenase armH2">
    <location>
        <begin position="1"/>
        <end position="516"/>
    </location>
</feature>
<feature type="region of interest" description="Disordered" evidence="2">
    <location>
        <begin position="440"/>
        <end position="475"/>
    </location>
</feature>
<feature type="binding site" evidence="1">
    <location>
        <position position="16"/>
    </location>
    <ligand>
        <name>FAD</name>
        <dbReference type="ChEBI" id="CHEBI:57692"/>
    </ligand>
</feature>
<feature type="binding site" evidence="1">
    <location>
        <position position="19"/>
    </location>
    <ligand>
        <name>FAD</name>
        <dbReference type="ChEBI" id="CHEBI:57692"/>
    </ligand>
</feature>
<feature type="binding site" evidence="1">
    <location>
        <position position="49"/>
    </location>
    <ligand>
        <name>FAD</name>
        <dbReference type="ChEBI" id="CHEBI:57692"/>
    </ligand>
</feature>
<feature type="binding site" evidence="1">
    <location>
        <position position="328"/>
    </location>
    <ligand>
        <name>chloride</name>
        <dbReference type="ChEBI" id="CHEBI:17996"/>
    </ligand>
</feature>
<feature type="binding site" evidence="1">
    <location>
        <position position="329"/>
    </location>
    <ligand>
        <name>chloride</name>
        <dbReference type="ChEBI" id="CHEBI:17996"/>
    </ligand>
</feature>
<feature type="binding site" evidence="1">
    <location>
        <position position="330"/>
    </location>
    <ligand>
        <name>FAD</name>
        <dbReference type="ChEBI" id="CHEBI:57692"/>
    </ligand>
</feature>
<keyword id="KW-0274">FAD</keyword>
<keyword id="KW-0285">Flavoprotein</keyword>
<keyword id="KW-0503">Monooxygenase</keyword>
<keyword id="KW-0560">Oxidoreductase</keyword>
<dbReference type="EC" id="1.14.19.-" evidence="6"/>
<dbReference type="EMBL" id="JF739170">
    <property type="protein sequence ID" value="AEM76786.1"/>
    <property type="molecule type" value="Genomic_DNA"/>
</dbReference>
<dbReference type="SMR" id="G3FLZ8"/>
<dbReference type="GO" id="GO:0140907">
    <property type="term" value="F:flavin-dependent halogenase activity"/>
    <property type="evidence" value="ECO:0000314"/>
    <property type="project" value="GO_Central"/>
</dbReference>
<dbReference type="GO" id="GO:0004497">
    <property type="term" value="F:monooxygenase activity"/>
    <property type="evidence" value="ECO:0007669"/>
    <property type="project" value="UniProtKB-KW"/>
</dbReference>
<dbReference type="GO" id="GO:0044550">
    <property type="term" value="P:secondary metabolite biosynthetic process"/>
    <property type="evidence" value="ECO:0000314"/>
    <property type="project" value="GO_Central"/>
</dbReference>
<dbReference type="Gene3D" id="3.50.50.60">
    <property type="entry name" value="FAD/NAD(P)-binding domain"/>
    <property type="match status" value="1"/>
</dbReference>
<dbReference type="InterPro" id="IPR036188">
    <property type="entry name" value="FAD/NAD-bd_sf"/>
</dbReference>
<dbReference type="InterPro" id="IPR050816">
    <property type="entry name" value="Flavin-dep_Halogenase_NPB"/>
</dbReference>
<dbReference type="InterPro" id="IPR006905">
    <property type="entry name" value="Flavin_halogenase"/>
</dbReference>
<dbReference type="PANTHER" id="PTHR43747:SF5">
    <property type="entry name" value="FAD-BINDING DOMAIN-CONTAINING PROTEIN"/>
    <property type="match status" value="1"/>
</dbReference>
<dbReference type="PANTHER" id="PTHR43747">
    <property type="entry name" value="FAD-BINDING PROTEIN"/>
    <property type="match status" value="1"/>
</dbReference>
<dbReference type="Pfam" id="PF04820">
    <property type="entry name" value="Trp_halogenase"/>
    <property type="match status" value="2"/>
</dbReference>
<dbReference type="SUPFAM" id="SSF51905">
    <property type="entry name" value="FAD/NAD(P)-binding domain"/>
    <property type="match status" value="1"/>
</dbReference>
<name>ARMH2_ARMME</name>
<proteinExistence type="evidence at protein level"/>
<gene>
    <name evidence="11" type="primary">armH2</name>
</gene>
<organism>
    <name type="scientific">Armillaria mellea</name>
    <name type="common">Honey mushroom</name>
    <name type="synonym">Agaricus melleus</name>
    <dbReference type="NCBI Taxonomy" id="47429"/>
    <lineage>
        <taxon>Eukaryota</taxon>
        <taxon>Fungi</taxon>
        <taxon>Dikarya</taxon>
        <taxon>Basidiomycota</taxon>
        <taxon>Agaricomycotina</taxon>
        <taxon>Agaricomycetes</taxon>
        <taxon>Agaricomycetidae</taxon>
        <taxon>Agaricales</taxon>
        <taxon>Marasmiineae</taxon>
        <taxon>Physalacriaceae</taxon>
        <taxon>Armillaria</taxon>
    </lineage>
</organism>
<evidence type="ECO:0000250" key="1">
    <source>
        <dbReference type="UniProtKB" id="P95480"/>
    </source>
</evidence>
<evidence type="ECO:0000256" key="2">
    <source>
        <dbReference type="SAM" id="MobiDB-lite"/>
    </source>
</evidence>
<evidence type="ECO:0000269" key="3">
    <source>
    </source>
</evidence>
<evidence type="ECO:0000269" key="4">
    <source>
    </source>
</evidence>
<evidence type="ECO:0000269" key="5">
    <source>
    </source>
</evidence>
<evidence type="ECO:0000269" key="6">
    <source>
    </source>
</evidence>
<evidence type="ECO:0000269" key="7">
    <source>
    </source>
</evidence>
<evidence type="ECO:0000269" key="8">
    <source>
    </source>
</evidence>
<evidence type="ECO:0000269" key="9">
    <source>
    </source>
</evidence>
<evidence type="ECO:0000269" key="10">
    <source>
    </source>
</evidence>
<evidence type="ECO:0000303" key="11">
    <source>
    </source>
</evidence>
<evidence type="ECO:0000305" key="12"/>
<evidence type="ECO:0000305" key="13">
    <source>
    </source>
</evidence>
<comment type="function">
    <text evidence="6">Flavin-dependent halogenase involved in the biosynthesis of melleolides, a range of antifungal and phytotoxic polyketide derivatives composed of an orsellinic acid (OA) moiety esterified to various sesquiterpene alcohols. The halogenase catalyzes the transfer of a single chlorine atom to the melleolide backbone, resulting in a 6'-chloromelleolide product. The enzyme acts on free substrate and does not depend on carrier-protein-dependent acceptor molecules.</text>
</comment>
<comment type="catalytic activity">
    <reaction evidence="6">
        <text>melleolide F + FADH2 + chloride + O2 = 6'-chloromelleolide F + FAD + 2 H2O + H(+)</text>
        <dbReference type="Rhea" id="RHEA:67160"/>
        <dbReference type="ChEBI" id="CHEBI:15377"/>
        <dbReference type="ChEBI" id="CHEBI:15378"/>
        <dbReference type="ChEBI" id="CHEBI:15379"/>
        <dbReference type="ChEBI" id="CHEBI:17996"/>
        <dbReference type="ChEBI" id="CHEBI:57692"/>
        <dbReference type="ChEBI" id="CHEBI:58307"/>
        <dbReference type="ChEBI" id="CHEBI:167712"/>
        <dbReference type="ChEBI" id="CHEBI:167713"/>
    </reaction>
    <physiologicalReaction direction="left-to-right" evidence="6">
        <dbReference type="Rhea" id="RHEA:67161"/>
    </physiologicalReaction>
</comment>
<comment type="biotechnology">
    <text evidence="3 4 5 7 8 9">Melleolide sesquiterpene aryl esters are cytotoxic secondary products with anti-cancer potential (PubMed:21376582, PubMed:26952552). Armillaridin shows therapeutic and radiosensitizing effects on human esophageal cancer cells (PubMed:23864890). Armillaridin induces autophagy-associated cell death in human chronic myelogenous leukemia as well as of hepatocellular carcinoma cells (PubMed:27592257, PubMed:31488037). Armillaridin can also inhibit the differentiation and activation of human macrophages and thus might have potential to be developed as a biological response modifier for inflammatory diseases (PubMed:25746621).</text>
</comment>
<comment type="miscellaneous">
    <text evidence="10 13">Armillaria species are both devastating forest pathogens and some of the largest and oldest terrestrial organisms on Earth (Probable) (PubMed:31746694). They forage for hosts and achieve immense colony sizes via rhizomorphs, root-like multicellular structures of clonal dispersal (Probable).</text>
</comment>
<comment type="similarity">
    <text evidence="12">Belongs to the flavin-dependent halogenase family.</text>
</comment>
<reference key="1">
    <citation type="journal article" date="2011" name="Fungal Biol.">
        <title>Characterisation of the ArmA adenylation domain implies a more diverse secondary metabolism in the genus Armillaria.</title>
        <authorList>
            <person name="Misiek M."/>
            <person name="Braesel J."/>
            <person name="Hoffmeister D."/>
        </authorList>
    </citation>
    <scope>NUCLEOTIDE SEQUENCE [GENOMIC DNA]</scope>
    <source>
        <strain>DSM 3731</strain>
    </source>
</reference>
<reference key="2">
    <citation type="journal article" date="2011" name="Bioorg. Med. Chem. Lett.">
        <title>In vitro cytotoxicity of melleolide antibiotics: structural and mechanistic aspects.</title>
        <authorList>
            <person name="Bohnert M."/>
            <person name="Miethbauer S."/>
            <person name="Dahse H.M."/>
            <person name="Ziemen J."/>
            <person name="Nett M."/>
            <person name="Hoffmeister D."/>
        </authorList>
    </citation>
    <scope>BIOTECHNOLOGY</scope>
</reference>
<reference key="3">
    <citation type="journal article" date="2013" name="Evid. Based Complement Alternat. Med.">
        <title>Therapeutic and radiosensitizing effects of armillaridin on human esophageal cancer cells.</title>
        <authorList>
            <person name="Chi C.W."/>
            <person name="Chen C.C."/>
            <person name="Chen Y.J."/>
        </authorList>
    </citation>
    <scope>BIOTECHNOLOGY</scope>
</reference>
<reference key="4">
    <citation type="journal article" date="2015" name="Appl. Environ. Microbiol.">
        <title>A fivefold parallelized biosynthetic process secures chlorination of Armillaria mellea (honey mushroom) toxins.</title>
        <authorList>
            <person name="Wick J."/>
            <person name="Heine D."/>
            <person name="Lackner G."/>
            <person name="Misiek M."/>
            <person name="Tauber J."/>
            <person name="Jagusch H."/>
            <person name="Hertweck C."/>
            <person name="Hoffmeister D."/>
        </authorList>
    </citation>
    <scope>FUNCTION</scope>
    <scope>CATALYTIC ACTIVITY</scope>
</reference>
<reference key="5">
    <citation type="journal article" date="2015" name="Int. J. Med. Mushrooms">
        <title>Armillaridin, a honey medicinal mushroom, Armillaria mellea (higher basidiomycetes) component, inhibits differentiation and activation of human macrophages.</title>
        <authorList>
            <person name="Liu T.P."/>
            <person name="Chen C.C."/>
            <person name="Shiao P.Y."/>
            <person name="Shieh H.R."/>
            <person name="Chen Y.Y."/>
            <person name="Chen Y.J."/>
        </authorList>
    </citation>
    <scope>BIOTECHNOLOGY</scope>
</reference>
<reference key="6">
    <citation type="journal article" date="2016" name="J. Ethnopharmacol.">
        <title>Structure, cytotoxic activity and mechanism of protoilludane sesquiterpene aryl esters from the mycelium of Armillaria mellea.</title>
        <authorList>
            <person name="Li Z."/>
            <person name="Wang Y."/>
            <person name="Jiang B."/>
            <person name="Li W."/>
            <person name="Zheng L."/>
            <person name="Yang X."/>
            <person name="Bao Y."/>
            <person name="Sun L."/>
            <person name="Huang Y."/>
            <person name="Li Y."/>
        </authorList>
    </citation>
    <scope>BIOTECHNOLOGY</scope>
</reference>
<reference key="7">
    <citation type="journal article" date="2016" name="Tumor Biol.">
        <title>Armillaridin induces autophagy-associated cell death in human chronic myelogenous leukemia K562 cells.</title>
        <authorList>
            <person name="Chang W.H."/>
            <person name="Huang H.L."/>
            <person name="Huang W.P."/>
            <person name="Chen C.C."/>
            <person name="Chen Y.J."/>
        </authorList>
    </citation>
    <scope>BIOTECHNOLOGY</scope>
</reference>
<reference key="8">
    <citation type="journal article" date="2018" name="Curr. Biol.">
        <title>Armillaria.</title>
        <authorList>
            <person name="Sipos G."/>
            <person name="Anderson J.B."/>
            <person name="Nagy L.G."/>
        </authorList>
    </citation>
    <scope>MISCELLANEOUS</scope>
</reference>
<reference key="9">
    <citation type="journal article" date="2019" name="Am. J. Chin. Med.">
        <title>Induction of autophagic death of human hepatocellular carcinoma cells by armillaridin from Armillaria mellea.</title>
        <authorList>
            <person name="Leu Y.S."/>
            <person name="Chen Y.J."/>
            <person name="Chen C.C."/>
            <person name="Huang H.L."/>
        </authorList>
    </citation>
    <scope>BIOTECHNOLOGY</scope>
</reference>
<reference key="10">
    <citation type="journal article" date="2020" name="Plant Dis.">
        <title>Susceptibility of garden trees and shrubs to Armillaria root rot.</title>
        <authorList>
            <person name="Cromey M.G."/>
            <person name="Drakulic J."/>
            <person name="Beal E.J."/>
            <person name="Waghorn I.A.G."/>
            <person name="Perry J.N."/>
            <person name="Clover G.R.G."/>
        </authorList>
    </citation>
    <scope>MISCELLANEOUS</scope>
</reference>